<protein>
    <recommendedName>
        <fullName evidence="1">Large ribosomal subunit protein bL35</fullName>
    </recommendedName>
    <alternativeName>
        <fullName evidence="3">50S ribosomal protein L35</fullName>
    </alternativeName>
</protein>
<dbReference type="EMBL" id="CP000829">
    <property type="protein sequence ID" value="ACI60951.1"/>
    <property type="molecule type" value="Genomic_DNA"/>
</dbReference>
<dbReference type="SMR" id="B5XKT9"/>
<dbReference type="KEGG" id="soz:Spy49_0630"/>
<dbReference type="HOGENOM" id="CLU_169643_3_1_9"/>
<dbReference type="Proteomes" id="UP000001039">
    <property type="component" value="Chromosome"/>
</dbReference>
<dbReference type="GO" id="GO:0022625">
    <property type="term" value="C:cytosolic large ribosomal subunit"/>
    <property type="evidence" value="ECO:0007669"/>
    <property type="project" value="TreeGrafter"/>
</dbReference>
<dbReference type="GO" id="GO:0003735">
    <property type="term" value="F:structural constituent of ribosome"/>
    <property type="evidence" value="ECO:0007669"/>
    <property type="project" value="InterPro"/>
</dbReference>
<dbReference type="GO" id="GO:0006412">
    <property type="term" value="P:translation"/>
    <property type="evidence" value="ECO:0007669"/>
    <property type="project" value="UniProtKB-UniRule"/>
</dbReference>
<dbReference type="FunFam" id="4.10.410.60:FF:000001">
    <property type="entry name" value="50S ribosomal protein L35"/>
    <property type="match status" value="1"/>
</dbReference>
<dbReference type="Gene3D" id="4.10.410.60">
    <property type="match status" value="1"/>
</dbReference>
<dbReference type="HAMAP" id="MF_00514">
    <property type="entry name" value="Ribosomal_bL35"/>
    <property type="match status" value="1"/>
</dbReference>
<dbReference type="InterPro" id="IPR001706">
    <property type="entry name" value="Ribosomal_bL35"/>
</dbReference>
<dbReference type="InterPro" id="IPR021137">
    <property type="entry name" value="Ribosomal_bL35-like"/>
</dbReference>
<dbReference type="InterPro" id="IPR018265">
    <property type="entry name" value="Ribosomal_bL35_CS"/>
</dbReference>
<dbReference type="InterPro" id="IPR037229">
    <property type="entry name" value="Ribosomal_bL35_sf"/>
</dbReference>
<dbReference type="NCBIfam" id="TIGR00001">
    <property type="entry name" value="rpmI_bact"/>
    <property type="match status" value="1"/>
</dbReference>
<dbReference type="PANTHER" id="PTHR33343">
    <property type="entry name" value="54S RIBOSOMAL PROTEIN BL35M"/>
    <property type="match status" value="1"/>
</dbReference>
<dbReference type="PANTHER" id="PTHR33343:SF1">
    <property type="entry name" value="LARGE RIBOSOMAL SUBUNIT PROTEIN BL35M"/>
    <property type="match status" value="1"/>
</dbReference>
<dbReference type="Pfam" id="PF01632">
    <property type="entry name" value="Ribosomal_L35p"/>
    <property type="match status" value="1"/>
</dbReference>
<dbReference type="PRINTS" id="PR00064">
    <property type="entry name" value="RIBOSOMALL35"/>
</dbReference>
<dbReference type="SUPFAM" id="SSF143034">
    <property type="entry name" value="L35p-like"/>
    <property type="match status" value="1"/>
</dbReference>
<dbReference type="PROSITE" id="PS00936">
    <property type="entry name" value="RIBOSOMAL_L35"/>
    <property type="match status" value="1"/>
</dbReference>
<proteinExistence type="inferred from homology"/>
<name>RL35_STRPZ</name>
<keyword id="KW-0687">Ribonucleoprotein</keyword>
<keyword id="KW-0689">Ribosomal protein</keyword>
<organism>
    <name type="scientific">Streptococcus pyogenes serotype M49 (strain NZ131)</name>
    <dbReference type="NCBI Taxonomy" id="471876"/>
    <lineage>
        <taxon>Bacteria</taxon>
        <taxon>Bacillati</taxon>
        <taxon>Bacillota</taxon>
        <taxon>Bacilli</taxon>
        <taxon>Lactobacillales</taxon>
        <taxon>Streptococcaceae</taxon>
        <taxon>Streptococcus</taxon>
    </lineage>
</organism>
<comment type="similarity">
    <text evidence="1">Belongs to the bacterial ribosomal protein bL35 family.</text>
</comment>
<reference key="1">
    <citation type="journal article" date="2008" name="J. Bacteriol.">
        <title>Genome sequence of a nephritogenic and highly transformable M49 strain of Streptococcus pyogenes.</title>
        <authorList>
            <person name="McShan W.M."/>
            <person name="Ferretti J.J."/>
            <person name="Karasawa T."/>
            <person name="Suvorov A.N."/>
            <person name="Lin S."/>
            <person name="Qin B."/>
            <person name="Jia H."/>
            <person name="Kenton S."/>
            <person name="Najar F."/>
            <person name="Wu H."/>
            <person name="Scott J."/>
            <person name="Roe B.A."/>
            <person name="Savic D.J."/>
        </authorList>
    </citation>
    <scope>NUCLEOTIDE SEQUENCE [LARGE SCALE GENOMIC DNA]</scope>
    <source>
        <strain>NZ131</strain>
    </source>
</reference>
<feature type="chain" id="PRO_1000127416" description="Large ribosomal subunit protein bL35">
    <location>
        <begin position="1"/>
        <end position="65"/>
    </location>
</feature>
<feature type="region of interest" description="Disordered" evidence="2">
    <location>
        <begin position="1"/>
        <end position="20"/>
    </location>
</feature>
<feature type="compositionally biased region" description="Basic residues" evidence="2">
    <location>
        <begin position="1"/>
        <end position="16"/>
    </location>
</feature>
<sequence>MPKQKTHRASAKRFKRTGSGGLKRFRAFTSHRFHGKTKKQRRHLRKAGLVSSGDFKRIKAMVTGL</sequence>
<gene>
    <name evidence="1" type="primary">rpmI</name>
    <name type="ordered locus">Spy49_0630</name>
</gene>
<accession>B5XKT9</accession>
<evidence type="ECO:0000255" key="1">
    <source>
        <dbReference type="HAMAP-Rule" id="MF_00514"/>
    </source>
</evidence>
<evidence type="ECO:0000256" key="2">
    <source>
        <dbReference type="SAM" id="MobiDB-lite"/>
    </source>
</evidence>
<evidence type="ECO:0000305" key="3"/>